<comment type="disruption phenotype">
    <text evidence="2">Leads to cell death when overexpressing the camptothecin mimetic TOP1-T(722)A mutant.</text>
</comment>
<comment type="similarity">
    <text evidence="3">Belongs to the flocculin family.</text>
</comment>
<keyword id="KW-1185">Reference proteome</keyword>
<name>TDA8_YEAST</name>
<reference key="1">
    <citation type="journal article" date="1995" name="Proc. Natl. Acad. Sci. U.S.A.">
        <title>The nucleotide sequence of chromosome I from Saccharomyces cerevisiae.</title>
        <authorList>
            <person name="Bussey H."/>
            <person name="Kaback D.B."/>
            <person name="Zhong W.-W."/>
            <person name="Vo D.H."/>
            <person name="Clark M.W."/>
            <person name="Fortin N."/>
            <person name="Hall J."/>
            <person name="Ouellette B.F.F."/>
            <person name="Keng T."/>
            <person name="Barton A.B."/>
            <person name="Su Y."/>
            <person name="Davies C.J."/>
            <person name="Storms R.K."/>
        </authorList>
    </citation>
    <scope>NUCLEOTIDE SEQUENCE [LARGE SCALE GENOMIC DNA]</scope>
    <source>
        <strain>ATCC 204508 / S288c</strain>
    </source>
</reference>
<reference key="2">
    <citation type="journal article" date="2014" name="G3 (Bethesda)">
        <title>The reference genome sequence of Saccharomyces cerevisiae: Then and now.</title>
        <authorList>
            <person name="Engel S.R."/>
            <person name="Dietrich F.S."/>
            <person name="Fisk D.G."/>
            <person name="Binkley G."/>
            <person name="Balakrishnan R."/>
            <person name="Costanzo M.C."/>
            <person name="Dwight S.S."/>
            <person name="Hitz B.C."/>
            <person name="Karra K."/>
            <person name="Nash R.S."/>
            <person name="Weng S."/>
            <person name="Wong E.D."/>
            <person name="Lloyd P."/>
            <person name="Skrzypek M.S."/>
            <person name="Miyasato S.R."/>
            <person name="Simison M."/>
            <person name="Cherry J.M."/>
        </authorList>
    </citation>
    <scope>GENOME REANNOTATION</scope>
    <source>
        <strain>ATCC 204508 / S288c</strain>
    </source>
</reference>
<reference key="3">
    <citation type="journal article" date="2007" name="Genome Res.">
        <title>Approaching a complete repository of sequence-verified protein-encoding clones for Saccharomyces cerevisiae.</title>
        <authorList>
            <person name="Hu Y."/>
            <person name="Rolfs A."/>
            <person name="Bhullar B."/>
            <person name="Murthy T.V.S."/>
            <person name="Zhu C."/>
            <person name="Berger M.F."/>
            <person name="Camargo A.A."/>
            <person name="Kelley F."/>
            <person name="McCarron S."/>
            <person name="Jepson D."/>
            <person name="Richardson A."/>
            <person name="Raphael J."/>
            <person name="Moreira D."/>
            <person name="Taycher E."/>
            <person name="Zuo D."/>
            <person name="Mohr S."/>
            <person name="Kane M.F."/>
            <person name="Williamson J."/>
            <person name="Simpson A.J.G."/>
            <person name="Bulyk M.L."/>
            <person name="Harlow E."/>
            <person name="Marsischky G."/>
            <person name="Kolodner R.D."/>
            <person name="LaBaer J."/>
        </authorList>
    </citation>
    <scope>NUCLEOTIDE SEQUENCE [GENOMIC DNA]</scope>
    <source>
        <strain>ATCC 204508 / S288c</strain>
    </source>
</reference>
<reference key="4">
    <citation type="journal article" date="2011" name="Genome Res.">
        <title>Selective ploidy ablation, a high-throughput plasmid transfer protocol, identifies new genes affecting topoisomerase I-induced DNA damage.</title>
        <authorList>
            <person name="Reid R.J."/>
            <person name="Gonzalez-Barrera S."/>
            <person name="Sunjevaric I."/>
            <person name="Alvaro D."/>
            <person name="Ciccone S."/>
            <person name="Wagner M."/>
            <person name="Rothstein R."/>
        </authorList>
    </citation>
    <scope>DISRUPTION PHENOTYPE</scope>
</reference>
<sequence length="126" mass="13886">MTGYFLPPQTSSYTFRFAKVDDSAILSVGGDVAFGCCAQEQPPITSTNFTINGIKPWQGRLPDNIAGTVYMYAGFYCPMKIVYSNAVSWHTLPVSVELPDVTTVSDDFAGHVYSFDDDLTAQLYYP</sequence>
<proteinExistence type="inferred from homology"/>
<accession>Q6B2U8</accession>
<accession>D6VPF3</accession>
<protein>
    <recommendedName>
        <fullName>Topoisomerase I damage affected protein 8</fullName>
    </recommendedName>
</protein>
<dbReference type="EMBL" id="U12980">
    <property type="status" value="NOT_ANNOTATED_CDS"/>
    <property type="molecule type" value="Genomic_DNA"/>
</dbReference>
<dbReference type="EMBL" id="AY692632">
    <property type="protein sequence ID" value="AAT92651.1"/>
    <property type="molecule type" value="Genomic_DNA"/>
</dbReference>
<dbReference type="EMBL" id="BK006935">
    <property type="protein sequence ID" value="DAA06923.1"/>
    <property type="molecule type" value="Genomic_DNA"/>
</dbReference>
<dbReference type="RefSeq" id="NP_058136.1">
    <property type="nucleotide sequence ID" value="NM_001180041.1"/>
</dbReference>
<dbReference type="SMR" id="Q6B2U8"/>
<dbReference type="BioGRID" id="31765">
    <property type="interactions" value="39"/>
</dbReference>
<dbReference type="FunCoup" id="Q6B2U8">
    <property type="interactions" value="35"/>
</dbReference>
<dbReference type="STRING" id="4932.YAL064C-A"/>
<dbReference type="PaxDb" id="4932-YAL064C-A"/>
<dbReference type="EnsemblFungi" id="YAL064C-A_mRNA">
    <property type="protein sequence ID" value="YAL064C-A"/>
    <property type="gene ID" value="YAL064C-A"/>
</dbReference>
<dbReference type="GeneID" id="851234"/>
<dbReference type="KEGG" id="sce:YAL064C-A"/>
<dbReference type="AGR" id="SGD:S000002140"/>
<dbReference type="SGD" id="S000002140">
    <property type="gene designation" value="TDA8"/>
</dbReference>
<dbReference type="VEuPathDB" id="FungiDB:YAL064C-A"/>
<dbReference type="GeneTree" id="ENSGT00940000180962"/>
<dbReference type="HOGENOM" id="CLU_1983318_0_0_1"/>
<dbReference type="InParanoid" id="Q6B2U8"/>
<dbReference type="OrthoDB" id="4070698at2759"/>
<dbReference type="BioCyc" id="YEAST:G3O-28892-MONOMER"/>
<dbReference type="BioGRID-ORCS" id="851234">
    <property type="hits" value="0 hits in 10 CRISPR screens"/>
</dbReference>
<dbReference type="PRO" id="PR:Q6B2U8"/>
<dbReference type="Proteomes" id="UP000002311">
    <property type="component" value="Chromosome I"/>
</dbReference>
<dbReference type="RNAct" id="Q6B2U8">
    <property type="molecule type" value="protein"/>
</dbReference>
<dbReference type="Gene3D" id="2.60.120.1560">
    <property type="match status" value="1"/>
</dbReference>
<dbReference type="InterPro" id="IPR037524">
    <property type="entry name" value="PA14/GLEYA"/>
</dbReference>
<dbReference type="InterPro" id="IPR011658">
    <property type="entry name" value="PA14_dom"/>
</dbReference>
<dbReference type="Pfam" id="PF07691">
    <property type="entry name" value="PA14"/>
    <property type="match status" value="1"/>
</dbReference>
<dbReference type="PROSITE" id="PS51820">
    <property type="entry name" value="PA14"/>
    <property type="match status" value="1"/>
</dbReference>
<gene>
    <name type="primary">TDA8</name>
    <name type="ordered locus">YAL064C-A</name>
</gene>
<feature type="chain" id="PRO_0000268622" description="Topoisomerase I damage affected protein 8">
    <location>
        <begin position="1"/>
        <end position="126"/>
    </location>
</feature>
<feature type="domain" description="PA14" evidence="1">
    <location>
        <begin position="1"/>
        <end position="110"/>
    </location>
</feature>
<evidence type="ECO:0000255" key="1">
    <source>
        <dbReference type="PROSITE-ProRule" id="PRU01164"/>
    </source>
</evidence>
<evidence type="ECO:0000269" key="2">
    <source>
    </source>
</evidence>
<evidence type="ECO:0000305" key="3"/>
<organism>
    <name type="scientific">Saccharomyces cerevisiae (strain ATCC 204508 / S288c)</name>
    <name type="common">Baker's yeast</name>
    <dbReference type="NCBI Taxonomy" id="559292"/>
    <lineage>
        <taxon>Eukaryota</taxon>
        <taxon>Fungi</taxon>
        <taxon>Dikarya</taxon>
        <taxon>Ascomycota</taxon>
        <taxon>Saccharomycotina</taxon>
        <taxon>Saccharomycetes</taxon>
        <taxon>Saccharomycetales</taxon>
        <taxon>Saccharomycetaceae</taxon>
        <taxon>Saccharomyces</taxon>
    </lineage>
</organism>